<accession>Q3E8W4</accession>
<gene>
    <name type="primary">ANX2</name>
    <name type="ordered locus">At5g28680</name>
    <name type="ORF">F4I4.60</name>
</gene>
<sequence length="858" mass="94297">MNEKLRILFSFLCFFYVLLVSPSQSNGQDISLSCGASEPAVDQDKKKWEPDTKFLKTPNTVHAPATYQDPSLLSTVPYMTSRIFTAPATYEIPVKGDKRHMLRLHFYPSTYTGLNILDSYFSVAANDLTLLSNFSAAITCQALTQAYLVREYSLAPSEKDVLSIIFTPSDKHPKAFAFINGIEVIPMPELFDTASLVGFSDQTSDTKTANLQTMFRLNVGGQDIPGSQDSGGLTRTWYNDAPYIFSAGLGVTLQASNNFRIDYQKMPVSTAPADVYKTARSQGPNGDINMKSNLTWMFQVDTNFTYIMRLHFCEFQLAKINQKVFNIFINNRTAQGDTNPADILGWTGGKGIPTYKDYAIYVDANTGGGGEEISLQMTPSTFGQPEYYDSQLNGLEIFKIDTMKNLAGPNPKPSPMQANEDVKKDFQGDKRITAFVIGSAGGVAAVLFCALCFTMYQRKRKFSGSDSHTSSWLPIYGNSHTSATKSTISGKSNNGSHLSNLAAGLCRRFSLSEIKHGTHNFDESNVIGVGGFGKVYKGVIDGGTKVAIKKSNPNSEQGLNEFETEIELLSRLRHKHLVSLIGYCDEGGEMCLIYDYMSLGTLREHLYNTKRPQLTWKRRLEIAIGAARGLHYLHTGAKYTIIHRDVKTTNILLDENWVAKVSDFGLSKTGPNMNGGHVTTVVKGSFGYLDPEYFRRQQLTEKSDVYSFGVVLFEVLCARPALNPSLSKEQVSLGDWAMNCKRKGTLEDIIDPNLKGKINPECLKKFADTAEKCLSDSGLDRPTMGDVLWNLEFALQLQETADGSRHRTPSNGGGSVDLGGGGGGVTVNISAGESDLGDDLSSEENSGIFSQIVNPKGR</sequence>
<keyword id="KW-0002">3D-structure</keyword>
<keyword id="KW-0067">ATP-binding</keyword>
<keyword id="KW-1003">Cell membrane</keyword>
<keyword id="KW-0278">Fertilization</keyword>
<keyword id="KW-0325">Glycoprotein</keyword>
<keyword id="KW-0418">Kinase</keyword>
<keyword id="KW-0472">Membrane</keyword>
<keyword id="KW-0547">Nucleotide-binding</keyword>
<keyword id="KW-1185">Reference proteome</keyword>
<keyword id="KW-0723">Serine/threonine-protein kinase</keyword>
<keyword id="KW-0732">Signal</keyword>
<keyword id="KW-0808">Transferase</keyword>
<keyword id="KW-0812">Transmembrane</keyword>
<keyword id="KW-1133">Transmembrane helix</keyword>
<reference key="1">
    <citation type="journal article" date="2000" name="Nature">
        <title>Sequence and analysis of chromosome 5 of the plant Arabidopsis thaliana.</title>
        <authorList>
            <person name="Tabata S."/>
            <person name="Kaneko T."/>
            <person name="Nakamura Y."/>
            <person name="Kotani H."/>
            <person name="Kato T."/>
            <person name="Asamizu E."/>
            <person name="Miyajima N."/>
            <person name="Sasamoto S."/>
            <person name="Kimura T."/>
            <person name="Hosouchi T."/>
            <person name="Kawashima K."/>
            <person name="Kohara M."/>
            <person name="Matsumoto M."/>
            <person name="Matsuno A."/>
            <person name="Muraki A."/>
            <person name="Nakayama S."/>
            <person name="Nakazaki N."/>
            <person name="Naruo K."/>
            <person name="Okumura S."/>
            <person name="Shinpo S."/>
            <person name="Takeuchi C."/>
            <person name="Wada T."/>
            <person name="Watanabe A."/>
            <person name="Yamada M."/>
            <person name="Yasuda M."/>
            <person name="Sato S."/>
            <person name="de la Bastide M."/>
            <person name="Huang E."/>
            <person name="Spiegel L."/>
            <person name="Gnoj L."/>
            <person name="O'Shaughnessy A."/>
            <person name="Preston R."/>
            <person name="Habermann K."/>
            <person name="Murray J."/>
            <person name="Johnson D."/>
            <person name="Rohlfing T."/>
            <person name="Nelson J."/>
            <person name="Stoneking T."/>
            <person name="Pepin K."/>
            <person name="Spieth J."/>
            <person name="Sekhon M."/>
            <person name="Armstrong J."/>
            <person name="Becker M."/>
            <person name="Belter E."/>
            <person name="Cordum H."/>
            <person name="Cordes M."/>
            <person name="Courtney L."/>
            <person name="Courtney W."/>
            <person name="Dante M."/>
            <person name="Du H."/>
            <person name="Edwards J."/>
            <person name="Fryman J."/>
            <person name="Haakensen B."/>
            <person name="Lamar E."/>
            <person name="Latreille P."/>
            <person name="Leonard S."/>
            <person name="Meyer R."/>
            <person name="Mulvaney E."/>
            <person name="Ozersky P."/>
            <person name="Riley A."/>
            <person name="Strowmatt C."/>
            <person name="Wagner-McPherson C."/>
            <person name="Wollam A."/>
            <person name="Yoakum M."/>
            <person name="Bell M."/>
            <person name="Dedhia N."/>
            <person name="Parnell L."/>
            <person name="Shah R."/>
            <person name="Rodriguez M."/>
            <person name="Hoon See L."/>
            <person name="Vil D."/>
            <person name="Baker J."/>
            <person name="Kirchoff K."/>
            <person name="Toth K."/>
            <person name="King L."/>
            <person name="Bahret A."/>
            <person name="Miller B."/>
            <person name="Marra M.A."/>
            <person name="Martienssen R."/>
            <person name="McCombie W.R."/>
            <person name="Wilson R.K."/>
            <person name="Murphy G."/>
            <person name="Bancroft I."/>
            <person name="Volckaert G."/>
            <person name="Wambutt R."/>
            <person name="Duesterhoeft A."/>
            <person name="Stiekema W."/>
            <person name="Pohl T."/>
            <person name="Entian K.-D."/>
            <person name="Terryn N."/>
            <person name="Hartley N."/>
            <person name="Bent E."/>
            <person name="Johnson S."/>
            <person name="Langham S.-A."/>
            <person name="McCullagh B."/>
            <person name="Robben J."/>
            <person name="Grymonprez B."/>
            <person name="Zimmermann W."/>
            <person name="Ramsperger U."/>
            <person name="Wedler H."/>
            <person name="Balke K."/>
            <person name="Wedler E."/>
            <person name="Peters S."/>
            <person name="van Staveren M."/>
            <person name="Dirkse W."/>
            <person name="Mooijman P."/>
            <person name="Klein Lankhorst R."/>
            <person name="Weitzenegger T."/>
            <person name="Bothe G."/>
            <person name="Rose M."/>
            <person name="Hauf J."/>
            <person name="Berneiser S."/>
            <person name="Hempel S."/>
            <person name="Feldpausch M."/>
            <person name="Lamberth S."/>
            <person name="Villarroel R."/>
            <person name="Gielen J."/>
            <person name="Ardiles W."/>
            <person name="Bents O."/>
            <person name="Lemcke K."/>
            <person name="Kolesov G."/>
            <person name="Mayer K.F.X."/>
            <person name="Rudd S."/>
            <person name="Schoof H."/>
            <person name="Schueller C."/>
            <person name="Zaccaria P."/>
            <person name="Mewes H.-W."/>
            <person name="Bevan M."/>
            <person name="Fransz P.F."/>
        </authorList>
    </citation>
    <scope>NUCLEOTIDE SEQUENCE [LARGE SCALE GENOMIC DNA]</scope>
    <source>
        <strain>cv. Columbia</strain>
    </source>
</reference>
<reference key="2">
    <citation type="journal article" date="2017" name="Plant J.">
        <title>Araport11: a complete reannotation of the Arabidopsis thaliana reference genome.</title>
        <authorList>
            <person name="Cheng C.Y."/>
            <person name="Krishnakumar V."/>
            <person name="Chan A.P."/>
            <person name="Thibaud-Nissen F."/>
            <person name="Schobel S."/>
            <person name="Town C.D."/>
        </authorList>
    </citation>
    <scope>GENOME REANNOTATION</scope>
    <source>
        <strain>cv. Columbia</strain>
    </source>
</reference>
<reference key="3">
    <citation type="journal article" date="2009" name="Curr. Biol.">
        <title>ANXUR1 and 2, sister genes to FERONIA/SIRENE, are male factors for coordinated fertilization.</title>
        <authorList>
            <person name="Miyazaki S."/>
            <person name="Murata T."/>
            <person name="Sakurai-Ozato N."/>
            <person name="Kubo M."/>
            <person name="Demura T."/>
            <person name="Fukuda H."/>
            <person name="Hasebe M."/>
        </authorList>
    </citation>
    <scope>FUNCTION</scope>
    <scope>SUBCELLULAR LOCATION</scope>
    <scope>TISSUE SPECIFICITY</scope>
    <scope>DISRUPTION PHENOTYPE</scope>
</reference>
<reference key="4">
    <citation type="journal article" date="2009" name="Mol. Plant">
        <title>Diverse transcriptional programs associated with environmental stress and hormones in the Arabidopsis receptor-like kinase gene family.</title>
        <authorList>
            <person name="Chae L."/>
            <person name="Sudat S."/>
            <person name="Dudoit S."/>
            <person name="Zhu T."/>
            <person name="Luan S."/>
        </authorList>
    </citation>
    <scope>GENE FAMILY</scope>
</reference>
<reference key="5">
    <citation type="journal article" date="2018" name="Protein Sci.">
        <title>Crystal structures of the extracellular domains of the CrRLK1L receptor-like kinases ANXUR1 and ANXUR2.</title>
        <authorList>
            <person name="Du S."/>
            <person name="Qu L.J."/>
            <person name="Xiao J."/>
        </authorList>
    </citation>
    <scope>X-RAY CRYSTALLOGRAPHY (2.00 ANGSTROMS) OF 28-414</scope>
    <scope>GLYCOSYLATION AT ASN-133; ASN-293; ASN-303 AND ASN-331</scope>
</reference>
<proteinExistence type="evidence at protein level"/>
<dbReference type="EC" id="2.7.11.1"/>
<dbReference type="EMBL" id="AF272705">
    <property type="status" value="NOT_ANNOTATED_CDS"/>
    <property type="molecule type" value="Genomic_DNA"/>
</dbReference>
<dbReference type="EMBL" id="CP002688">
    <property type="protein sequence ID" value="AED93826.1"/>
    <property type="molecule type" value="Genomic_DNA"/>
</dbReference>
<dbReference type="EMBL" id="CP002688">
    <property type="protein sequence ID" value="ANM68270.1"/>
    <property type="molecule type" value="Genomic_DNA"/>
</dbReference>
<dbReference type="RefSeq" id="NP_001318669.1">
    <property type="nucleotide sequence ID" value="NM_001344080.1"/>
</dbReference>
<dbReference type="RefSeq" id="NP_198220.1">
    <property type="nucleotide sequence ID" value="NM_122751.2"/>
</dbReference>
<dbReference type="PDB" id="5Y92">
    <property type="method" value="X-ray"/>
    <property type="resolution" value="2.00 A"/>
    <property type="chains" value="A=28-414"/>
</dbReference>
<dbReference type="PDB" id="6A5C">
    <property type="method" value="X-ray"/>
    <property type="resolution" value="1.68 A"/>
    <property type="chains" value="A=21-450"/>
</dbReference>
<dbReference type="PDB" id="6FIH">
    <property type="method" value="X-ray"/>
    <property type="resolution" value="1.08 A"/>
    <property type="chains" value="A=27-431"/>
</dbReference>
<dbReference type="PDBsum" id="5Y92"/>
<dbReference type="PDBsum" id="6A5C"/>
<dbReference type="PDBsum" id="6FIH"/>
<dbReference type="SMR" id="Q3E8W4"/>
<dbReference type="BioGRID" id="18248">
    <property type="interactions" value="1"/>
</dbReference>
<dbReference type="IntAct" id="Q3E8W4">
    <property type="interactions" value="1"/>
</dbReference>
<dbReference type="STRING" id="3702.Q3E8W4"/>
<dbReference type="GlyCosmos" id="Q3E8W4">
    <property type="glycosylation" value="4 sites, No reported glycans"/>
</dbReference>
<dbReference type="GlyGen" id="Q3E8W4">
    <property type="glycosylation" value="5 sites"/>
</dbReference>
<dbReference type="iPTMnet" id="Q3E8W4"/>
<dbReference type="PaxDb" id="3702-AT5G28680.1"/>
<dbReference type="ProteomicsDB" id="244432"/>
<dbReference type="EnsemblPlants" id="AT5G28680.1">
    <property type="protein sequence ID" value="AT5G28680.1"/>
    <property type="gene ID" value="AT5G28680"/>
</dbReference>
<dbReference type="EnsemblPlants" id="AT5G28680.2">
    <property type="protein sequence ID" value="AT5G28680.2"/>
    <property type="gene ID" value="AT5G28680"/>
</dbReference>
<dbReference type="GeneID" id="832975"/>
<dbReference type="Gramene" id="AT5G28680.1">
    <property type="protein sequence ID" value="AT5G28680.1"/>
    <property type="gene ID" value="AT5G28680"/>
</dbReference>
<dbReference type="Gramene" id="AT5G28680.2">
    <property type="protein sequence ID" value="AT5G28680.2"/>
    <property type="gene ID" value="AT5G28680"/>
</dbReference>
<dbReference type="KEGG" id="ath:AT5G28680"/>
<dbReference type="Araport" id="AT5G28680"/>
<dbReference type="TAIR" id="AT5G28680">
    <property type="gene designation" value="ANX2"/>
</dbReference>
<dbReference type="eggNOG" id="KOG1187">
    <property type="taxonomic scope" value="Eukaryota"/>
</dbReference>
<dbReference type="HOGENOM" id="CLU_000288_42_1_1"/>
<dbReference type="InParanoid" id="Q3E8W4"/>
<dbReference type="OMA" id="ARWTIIH"/>
<dbReference type="PhylomeDB" id="Q3E8W4"/>
<dbReference type="PRO" id="PR:Q3E8W4"/>
<dbReference type="Proteomes" id="UP000006548">
    <property type="component" value="Chromosome 5"/>
</dbReference>
<dbReference type="ExpressionAtlas" id="Q3E8W4">
    <property type="expression patterns" value="baseline and differential"/>
</dbReference>
<dbReference type="GO" id="GO:0016324">
    <property type="term" value="C:apical plasma membrane"/>
    <property type="evidence" value="ECO:0000314"/>
    <property type="project" value="TAIR"/>
</dbReference>
<dbReference type="GO" id="GO:0090404">
    <property type="term" value="C:pollen tube tip"/>
    <property type="evidence" value="ECO:0000314"/>
    <property type="project" value="TAIR"/>
</dbReference>
<dbReference type="GO" id="GO:0005524">
    <property type="term" value="F:ATP binding"/>
    <property type="evidence" value="ECO:0007669"/>
    <property type="project" value="UniProtKB-KW"/>
</dbReference>
<dbReference type="GO" id="GO:0106310">
    <property type="term" value="F:protein serine kinase activity"/>
    <property type="evidence" value="ECO:0007669"/>
    <property type="project" value="RHEA"/>
</dbReference>
<dbReference type="GO" id="GO:0004674">
    <property type="term" value="F:protein serine/threonine kinase activity"/>
    <property type="evidence" value="ECO:0007669"/>
    <property type="project" value="UniProtKB-KW"/>
</dbReference>
<dbReference type="GO" id="GO:0004714">
    <property type="term" value="F:transmembrane receptor protein tyrosine kinase activity"/>
    <property type="evidence" value="ECO:0007669"/>
    <property type="project" value="InterPro"/>
</dbReference>
<dbReference type="CDD" id="cd14066">
    <property type="entry name" value="STKc_IRAK"/>
    <property type="match status" value="1"/>
</dbReference>
<dbReference type="FunFam" id="2.60.120.430:FF:000003">
    <property type="entry name" value="FERONIA receptor-like kinase"/>
    <property type="match status" value="1"/>
</dbReference>
<dbReference type="FunFam" id="2.60.120.430:FF:000007">
    <property type="entry name" value="FERONIA receptor-like kinase"/>
    <property type="match status" value="1"/>
</dbReference>
<dbReference type="FunFam" id="1.10.510.10:FF:000058">
    <property type="entry name" value="Receptor-like protein kinase FERONIA"/>
    <property type="match status" value="1"/>
</dbReference>
<dbReference type="FunFam" id="3.30.200.20:FF:000039">
    <property type="entry name" value="receptor-like protein kinase FERONIA"/>
    <property type="match status" value="1"/>
</dbReference>
<dbReference type="Gene3D" id="2.60.120.430">
    <property type="entry name" value="Galactose-binding lectin"/>
    <property type="match status" value="2"/>
</dbReference>
<dbReference type="Gene3D" id="3.30.200.20">
    <property type="entry name" value="Phosphorylase Kinase, domain 1"/>
    <property type="match status" value="1"/>
</dbReference>
<dbReference type="Gene3D" id="1.10.510.10">
    <property type="entry name" value="Transferase(Phosphotransferase) domain 1"/>
    <property type="match status" value="1"/>
</dbReference>
<dbReference type="InterPro" id="IPR045272">
    <property type="entry name" value="ANXUR1/2-like"/>
</dbReference>
<dbReference type="InterPro" id="IPR011009">
    <property type="entry name" value="Kinase-like_dom_sf"/>
</dbReference>
<dbReference type="InterPro" id="IPR024788">
    <property type="entry name" value="Malectin-like_Carb-bd_dom"/>
</dbReference>
<dbReference type="InterPro" id="IPR000719">
    <property type="entry name" value="Prot_kinase_dom"/>
</dbReference>
<dbReference type="InterPro" id="IPR017441">
    <property type="entry name" value="Protein_kinase_ATP_BS"/>
</dbReference>
<dbReference type="InterPro" id="IPR001245">
    <property type="entry name" value="Ser-Thr/Tyr_kinase_cat_dom"/>
</dbReference>
<dbReference type="InterPro" id="IPR008271">
    <property type="entry name" value="Ser/Thr_kinase_AS"/>
</dbReference>
<dbReference type="PANTHER" id="PTHR34590">
    <property type="entry name" value="OS03G0124300 PROTEIN-RELATED"/>
    <property type="match status" value="1"/>
</dbReference>
<dbReference type="PANTHER" id="PTHR34590:SF5">
    <property type="entry name" value="OS04G0586500 PROTEIN"/>
    <property type="match status" value="1"/>
</dbReference>
<dbReference type="Pfam" id="PF12819">
    <property type="entry name" value="Malectin_like"/>
    <property type="match status" value="1"/>
</dbReference>
<dbReference type="Pfam" id="PF07714">
    <property type="entry name" value="PK_Tyr_Ser-Thr"/>
    <property type="match status" value="1"/>
</dbReference>
<dbReference type="SMART" id="SM00220">
    <property type="entry name" value="S_TKc"/>
    <property type="match status" value="1"/>
</dbReference>
<dbReference type="SUPFAM" id="SSF56112">
    <property type="entry name" value="Protein kinase-like (PK-like)"/>
    <property type="match status" value="1"/>
</dbReference>
<dbReference type="PROSITE" id="PS00107">
    <property type="entry name" value="PROTEIN_KINASE_ATP"/>
    <property type="match status" value="1"/>
</dbReference>
<dbReference type="PROSITE" id="PS50011">
    <property type="entry name" value="PROTEIN_KINASE_DOM"/>
    <property type="match status" value="1"/>
</dbReference>
<dbReference type="PROSITE" id="PS00108">
    <property type="entry name" value="PROTEIN_KINASE_ST"/>
    <property type="match status" value="1"/>
</dbReference>
<name>ANX2_ARATH</name>
<comment type="function">
    <text evidence="5">Receptor-like protein kinase that controls pollen tube behavior by directing rupture at proper timing to release the sperm cell.</text>
</comment>
<comment type="catalytic activity">
    <reaction>
        <text>L-seryl-[protein] + ATP = O-phospho-L-seryl-[protein] + ADP + H(+)</text>
        <dbReference type="Rhea" id="RHEA:17989"/>
        <dbReference type="Rhea" id="RHEA-COMP:9863"/>
        <dbReference type="Rhea" id="RHEA-COMP:11604"/>
        <dbReference type="ChEBI" id="CHEBI:15378"/>
        <dbReference type="ChEBI" id="CHEBI:29999"/>
        <dbReference type="ChEBI" id="CHEBI:30616"/>
        <dbReference type="ChEBI" id="CHEBI:83421"/>
        <dbReference type="ChEBI" id="CHEBI:456216"/>
        <dbReference type="EC" id="2.7.11.1"/>
    </reaction>
</comment>
<comment type="catalytic activity">
    <reaction>
        <text>L-threonyl-[protein] + ATP = O-phospho-L-threonyl-[protein] + ADP + H(+)</text>
        <dbReference type="Rhea" id="RHEA:46608"/>
        <dbReference type="Rhea" id="RHEA-COMP:11060"/>
        <dbReference type="Rhea" id="RHEA-COMP:11605"/>
        <dbReference type="ChEBI" id="CHEBI:15378"/>
        <dbReference type="ChEBI" id="CHEBI:30013"/>
        <dbReference type="ChEBI" id="CHEBI:30616"/>
        <dbReference type="ChEBI" id="CHEBI:61977"/>
        <dbReference type="ChEBI" id="CHEBI:456216"/>
        <dbReference type="EC" id="2.7.11.1"/>
    </reaction>
</comment>
<comment type="subcellular location">
    <subcellularLocation>
        <location evidence="5">Cell membrane</location>
        <topology evidence="5">Single-pass type I membrane protein</topology>
    </subcellularLocation>
</comment>
<comment type="tissue specificity">
    <text evidence="5">Expressed in pollen, but not in pistils or seedlings.</text>
</comment>
<comment type="disruption phenotype">
    <text evidence="5">No effect on male fertility and pollen germination, but siliques slightly shorter. Anx1 and anx2 double mutants show defects in male gametophytes due to premature pollen tube rupture.</text>
</comment>
<comment type="miscellaneous">
    <text>Male paralog of FERONIA, a female factor expressed in synergid cells that controls pollen tube behavior.</text>
</comment>
<comment type="miscellaneous">
    <text>Named Anxur after the husband of the Etruscan goddess of fertility Feronia.</text>
</comment>
<comment type="similarity">
    <text evidence="2">Belongs to the protein kinase superfamily. Ser/Thr protein kinase family.</text>
</comment>
<protein>
    <recommendedName>
        <fullName>Receptor-like protein kinase ANXUR2</fullName>
        <ecNumber>2.7.11.1</ecNumber>
    </recommendedName>
</protein>
<feature type="signal peptide" evidence="1">
    <location>
        <begin position="1"/>
        <end position="27"/>
    </location>
</feature>
<feature type="chain" id="PRO_0000385332" description="Receptor-like protein kinase ANXUR2">
    <location>
        <begin position="28"/>
        <end position="858"/>
    </location>
</feature>
<feature type="topological domain" description="Extracellular" evidence="1">
    <location>
        <begin position="28"/>
        <end position="431"/>
    </location>
</feature>
<feature type="transmembrane region" description="Helical" evidence="1">
    <location>
        <begin position="432"/>
        <end position="452"/>
    </location>
</feature>
<feature type="topological domain" description="Cytoplasmic" evidence="1">
    <location>
        <begin position="453"/>
        <end position="858"/>
    </location>
</feature>
<feature type="domain" description="Protein kinase" evidence="2">
    <location>
        <begin position="521"/>
        <end position="794"/>
    </location>
</feature>
<feature type="region of interest" description="Disordered" evidence="4">
    <location>
        <begin position="800"/>
        <end position="858"/>
    </location>
</feature>
<feature type="compositionally biased region" description="Gly residues" evidence="4">
    <location>
        <begin position="811"/>
        <end position="825"/>
    </location>
</feature>
<feature type="compositionally biased region" description="Polar residues" evidence="4">
    <location>
        <begin position="843"/>
        <end position="858"/>
    </location>
</feature>
<feature type="active site" description="Proton acceptor" evidence="2 3">
    <location>
        <position position="645"/>
    </location>
</feature>
<feature type="binding site" evidence="2">
    <location>
        <begin position="527"/>
        <end position="535"/>
    </location>
    <ligand>
        <name>ATP</name>
        <dbReference type="ChEBI" id="CHEBI:30616"/>
    </ligand>
</feature>
<feature type="binding site" evidence="2">
    <location>
        <position position="549"/>
    </location>
    <ligand>
        <name>ATP</name>
        <dbReference type="ChEBI" id="CHEBI:30616"/>
    </ligand>
</feature>
<feature type="glycosylation site" description="N-linked (GlcNAc...) asparagine" evidence="6 7">
    <location>
        <position position="133"/>
    </location>
</feature>
<feature type="glycosylation site" description="N-linked (GlcNAc...) asparagine" evidence="6 7">
    <location>
        <position position="293"/>
    </location>
</feature>
<feature type="glycosylation site" description="N-linked (GlcNAc...) asparagine" evidence="6 7">
    <location>
        <position position="303"/>
    </location>
</feature>
<feature type="glycosylation site" description="N-linked (GlcNAc...) asparagine" evidence="6 7">
    <location>
        <position position="331"/>
    </location>
</feature>
<feature type="strand" evidence="10">
    <location>
        <begin position="30"/>
        <end position="33"/>
    </location>
</feature>
<feature type="strand" evidence="10">
    <location>
        <begin position="47"/>
        <end position="51"/>
    </location>
</feature>
<feature type="helix" evidence="10">
    <location>
        <begin position="52"/>
        <end position="54"/>
    </location>
</feature>
<feature type="strand" evidence="9">
    <location>
        <begin position="57"/>
        <end position="59"/>
    </location>
</feature>
<feature type="strand" evidence="10">
    <location>
        <begin position="61"/>
        <end position="66"/>
    </location>
</feature>
<feature type="turn" evidence="10">
    <location>
        <begin position="76"/>
        <end position="79"/>
    </location>
</feature>
<feature type="strand" evidence="10">
    <location>
        <begin position="80"/>
        <end position="86"/>
    </location>
</feature>
<feature type="strand" evidence="10">
    <location>
        <begin position="88"/>
        <end position="93"/>
    </location>
</feature>
<feature type="strand" evidence="10">
    <location>
        <begin position="98"/>
        <end position="106"/>
    </location>
</feature>
<feature type="helix" evidence="10">
    <location>
        <begin position="116"/>
        <end position="118"/>
    </location>
</feature>
<feature type="strand" evidence="10">
    <location>
        <begin position="121"/>
        <end position="125"/>
    </location>
</feature>
<feature type="strand" evidence="10">
    <location>
        <begin position="128"/>
        <end position="134"/>
    </location>
</feature>
<feature type="helix" evidence="10">
    <location>
        <begin position="136"/>
        <end position="143"/>
    </location>
</feature>
<feature type="strand" evidence="10">
    <location>
        <begin position="148"/>
        <end position="154"/>
    </location>
</feature>
<feature type="strand" evidence="10">
    <location>
        <begin position="158"/>
        <end position="168"/>
    </location>
</feature>
<feature type="strand" evidence="8">
    <location>
        <begin position="170"/>
        <end position="172"/>
    </location>
</feature>
<feature type="strand" evidence="10">
    <location>
        <begin position="177"/>
        <end position="187"/>
    </location>
</feature>
<feature type="strand" evidence="9">
    <location>
        <begin position="193"/>
        <end position="196"/>
    </location>
</feature>
<feature type="strand" evidence="9">
    <location>
        <begin position="199"/>
        <end position="201"/>
    </location>
</feature>
<feature type="strand" evidence="9">
    <location>
        <begin position="203"/>
        <end position="205"/>
    </location>
</feature>
<feature type="strand" evidence="10">
    <location>
        <begin position="211"/>
        <end position="218"/>
    </location>
</feature>
<feature type="helix" evidence="10">
    <location>
        <begin position="226"/>
        <end position="228"/>
    </location>
</feature>
<feature type="strand" evidence="10">
    <location>
        <begin position="237"/>
        <end position="240"/>
    </location>
</feature>
<feature type="helix" evidence="10">
    <location>
        <begin position="241"/>
        <end position="243"/>
    </location>
</feature>
<feature type="strand" evidence="10">
    <location>
        <begin position="251"/>
        <end position="254"/>
    </location>
</feature>
<feature type="helix" evidence="10">
    <location>
        <begin position="268"/>
        <end position="270"/>
    </location>
</feature>
<feature type="helix" evidence="10">
    <location>
        <begin position="273"/>
        <end position="276"/>
    </location>
</feature>
<feature type="strand" evidence="10">
    <location>
        <begin position="278"/>
        <end position="281"/>
    </location>
</feature>
<feature type="helix" evidence="10">
    <location>
        <begin position="286"/>
        <end position="290"/>
    </location>
</feature>
<feature type="strand" evidence="10">
    <location>
        <begin position="294"/>
        <end position="299"/>
    </location>
</feature>
<feature type="strand" evidence="10">
    <location>
        <begin position="302"/>
        <end position="313"/>
    </location>
</feature>
<feature type="strand" evidence="10">
    <location>
        <begin position="325"/>
        <end position="329"/>
    </location>
</feature>
<feature type="strand" evidence="10">
    <location>
        <begin position="332"/>
        <end position="335"/>
    </location>
</feature>
<feature type="helix" evidence="10">
    <location>
        <begin position="343"/>
        <end position="347"/>
    </location>
</feature>
<feature type="strand" evidence="10">
    <location>
        <begin position="353"/>
        <end position="362"/>
    </location>
</feature>
<feature type="strand" evidence="10">
    <location>
        <begin position="364"/>
        <end position="366"/>
    </location>
</feature>
<feature type="strand" evidence="10">
    <location>
        <begin position="370"/>
        <end position="379"/>
    </location>
</feature>
<feature type="strand" evidence="10">
    <location>
        <begin position="394"/>
        <end position="400"/>
    </location>
</feature>
<organism>
    <name type="scientific">Arabidopsis thaliana</name>
    <name type="common">Mouse-ear cress</name>
    <dbReference type="NCBI Taxonomy" id="3702"/>
    <lineage>
        <taxon>Eukaryota</taxon>
        <taxon>Viridiplantae</taxon>
        <taxon>Streptophyta</taxon>
        <taxon>Embryophyta</taxon>
        <taxon>Tracheophyta</taxon>
        <taxon>Spermatophyta</taxon>
        <taxon>Magnoliopsida</taxon>
        <taxon>eudicotyledons</taxon>
        <taxon>Gunneridae</taxon>
        <taxon>Pentapetalae</taxon>
        <taxon>rosids</taxon>
        <taxon>malvids</taxon>
        <taxon>Brassicales</taxon>
        <taxon>Brassicaceae</taxon>
        <taxon>Camelineae</taxon>
        <taxon>Arabidopsis</taxon>
    </lineage>
</organism>
<evidence type="ECO:0000255" key="1"/>
<evidence type="ECO:0000255" key="2">
    <source>
        <dbReference type="PROSITE-ProRule" id="PRU00159"/>
    </source>
</evidence>
<evidence type="ECO:0000255" key="3">
    <source>
        <dbReference type="PROSITE-ProRule" id="PRU10027"/>
    </source>
</evidence>
<evidence type="ECO:0000256" key="4">
    <source>
        <dbReference type="SAM" id="MobiDB-lite"/>
    </source>
</evidence>
<evidence type="ECO:0000269" key="5">
    <source>
    </source>
</evidence>
<evidence type="ECO:0000269" key="6">
    <source>
    </source>
</evidence>
<evidence type="ECO:0007744" key="7">
    <source>
        <dbReference type="PDB" id="5Y92"/>
    </source>
</evidence>
<evidence type="ECO:0007829" key="8">
    <source>
        <dbReference type="PDB" id="5Y92"/>
    </source>
</evidence>
<evidence type="ECO:0007829" key="9">
    <source>
        <dbReference type="PDB" id="6A5C"/>
    </source>
</evidence>
<evidence type="ECO:0007829" key="10">
    <source>
        <dbReference type="PDB" id="6FIH"/>
    </source>
</evidence>